<sequence length="1468" mass="165401">MDVLEMLRASASGSYNTIFSDAWCQYVSKQITATVYMYCALVMMSLLFIAWFLYFKRMARLRLRDELARSISTATNSSGDLRGLRFRKRDKMLFYGRRMLRKVKNVSGQMYSSGKGYKRRAVMRFARRILQLRRDNMPLEMRTVEPPAEYLEETIEGSDRVPPDALYMLQSIRIFGHFEKPVFLRLCKHTQLLELMAGDYLFKITDPDDSVYIVQSGMINVYISNADGSTLSLKTVRKGESVTSLLSFIDVLSGNPSYYKTVTAKAIEKSVVIRLPMQAFEEVFQDNPDVMIRVIQVIMIRLQRVLFTALRNYLGLNAELVQNHMRYKSVSTMSGPINSQTSQSSRQAPNGPPMVINQLNLMQSAASGTGSGVSVTVTRPPSSPSRHSREEHTLSDPNPNPDGSFHGTTNLFTEVHGDAPNADLFQQQQQPSVGNLSTRRSSITLMTPDGSHSCVQTPGVTTSIDMRLVQSSAVDSLRKELGLSEEDSHIIEPFVELRELEPNVTLITEGNADDVCVWFVMTGTLAVYQSNQDATRAKQDKSDMLIHFVHPGEIVGGLAMLTGEASAYTIRSRSYARIAFIRRAAIYQIMRQRPRIVLDLGNGVVRRLSPLVRQCDYALDWIFLESGRAVYRQDESSDSTYIVLSGRMRSVITHPGGKKEIVGEYGKGDLVGIVEMITETSRTTTVMAVRDSELAKLPEGLFNAIKLRYPIVVTKLISFLSHRFLGSMQTRSGSGAPGAPVEANPVTHKYSTVALVPITDEVPLTPFTYELYHSLCAIGPVLRLTSDVVRKQLGSNIFEAANEYRLTSWLAQQEDRNIITLYQCDSSLSAWTQRCMRQADVILIVGLGDRSHLVGKFEREIDRLAMRTQKELVLLYPEATNAKPANTLSWLNARPWVTKHHHVLCVKRIFTRKSQYRINDLYSRVLLSEPNMHSDFSRLARWLTGNSIGLVLGGGGARGAAHIGMLKAIQEAGIPVDMVGGVSIGALMGALWCSDRNITTVTQKAREWSKKMTKWFLQLLDLTYPITSMFSGREFNKTIHDTFGDVSIEDLWIPYFTLTTDITASCHRIHTNGSLWRYVRSSMSLSGYMPPLCDPKDGHLLLDGGYVNNLPGHLWRYCRASMSIAGVFPPFCDYRDGHLLLDGCYTNNVPADVMHNLGAAHIIAIDVGSQDDTDLTNYGDDLSGWWLLYKKWNPFTSPVKVPDLPDIQSRLAYVSCVRQLEEVKNSDYCEYIRPPIDKYKTLAFGSFDEIRDVGYVFGKNYFENMAKAGRLGRFNQWFNKEPPKRVNHASLNEYTFIDLAQIVCRLPETYAVNTAELFSEDEDCDGYISEPTTLNTDRRRIQVSRAGNSLSFSETEMDSDVELDLKLERKMDKSTQSSPPTSSRTDMRGKEEAKHMANWHWGVKHKDETGSGATVATHTQTGQEQELQQQQKLQQLQQDQGARAEQLVDKDKEEDKENRSSPNNETKN</sequence>
<keyword id="KW-0217">Developmental protein</keyword>
<keyword id="KW-0256">Endoplasmic reticulum</keyword>
<keyword id="KW-0378">Hydrolase</keyword>
<keyword id="KW-0442">Lipid degradation</keyword>
<keyword id="KW-0443">Lipid metabolism</keyword>
<keyword id="KW-0472">Membrane</keyword>
<keyword id="KW-0524">Neurogenesis</keyword>
<keyword id="KW-0597">Phosphoprotein</keyword>
<keyword id="KW-1185">Reference proteome</keyword>
<keyword id="KW-0812">Transmembrane</keyword>
<keyword id="KW-1133">Transmembrane helix</keyword>
<protein>
    <recommendedName>
        <fullName evidence="2">Neuropathy target esterase sws</fullName>
    </recommendedName>
    <alternativeName>
        <fullName evidence="2">Swiss cheese</fullName>
        <ecNumber>3.1.1.5</ecNumber>
    </alternativeName>
</protein>
<accession>B4IL64</accession>
<feature type="chain" id="PRO_0000389226" description="Neuropathy target esterase sws">
    <location>
        <begin position="1"/>
        <end position="1468"/>
    </location>
</feature>
<feature type="topological domain" description="Lumenal" evidence="3">
    <location>
        <begin position="1"/>
        <end position="34"/>
    </location>
</feature>
<feature type="transmembrane region" description="Helical" evidence="3">
    <location>
        <begin position="35"/>
        <end position="55"/>
    </location>
</feature>
<feature type="topological domain" description="Cytoplasmic" evidence="3">
    <location>
        <begin position="56"/>
        <end position="1468"/>
    </location>
</feature>
<feature type="domain" description="PNPLA" evidence="4">
    <location>
        <begin position="950"/>
        <end position="1116"/>
    </location>
</feature>
<feature type="region of interest" description="Disordered" evidence="5">
    <location>
        <begin position="332"/>
        <end position="411"/>
    </location>
</feature>
<feature type="region of interest" description="Disordered" evidence="5">
    <location>
        <begin position="1368"/>
        <end position="1468"/>
    </location>
</feature>
<feature type="short sequence motif" description="GXGXXG" evidence="4">
    <location>
        <begin position="954"/>
        <end position="959"/>
    </location>
</feature>
<feature type="short sequence motif" description="GXSXG" evidence="4">
    <location>
        <begin position="981"/>
        <end position="985"/>
    </location>
</feature>
<feature type="short sequence motif" description="DGA/G" evidence="4">
    <location>
        <begin position="1103"/>
        <end position="1105"/>
    </location>
</feature>
<feature type="compositionally biased region" description="Polar residues" evidence="5">
    <location>
        <begin position="332"/>
        <end position="348"/>
    </location>
</feature>
<feature type="compositionally biased region" description="Polar residues" evidence="5">
    <location>
        <begin position="357"/>
        <end position="366"/>
    </location>
</feature>
<feature type="compositionally biased region" description="Low complexity" evidence="5">
    <location>
        <begin position="1374"/>
        <end position="1383"/>
    </location>
</feature>
<feature type="compositionally biased region" description="Basic and acidic residues" evidence="5">
    <location>
        <begin position="1385"/>
        <end position="1395"/>
    </location>
</feature>
<feature type="compositionally biased region" description="Low complexity" evidence="5">
    <location>
        <begin position="1419"/>
        <end position="1441"/>
    </location>
</feature>
<feature type="compositionally biased region" description="Basic and acidic residues" evidence="5">
    <location>
        <begin position="1446"/>
        <end position="1459"/>
    </location>
</feature>
<feature type="active site" description="Nucleophile" evidence="4">
    <location>
        <position position="983"/>
    </location>
</feature>
<feature type="active site" description="Proton acceptor" evidence="4">
    <location>
        <position position="1103"/>
    </location>
</feature>
<feature type="binding site" evidence="3">
    <location>
        <begin position="174"/>
        <end position="301"/>
    </location>
    <ligand>
        <name>a nucleoside 3',5'-cyclic phosphate</name>
        <dbReference type="ChEBI" id="CHEBI:58464"/>
        <label>1</label>
    </ligand>
</feature>
<feature type="binding site" evidence="3">
    <location>
        <begin position="480"/>
        <end position="607"/>
    </location>
    <ligand>
        <name>a nucleoside 3',5'-cyclic phosphate</name>
        <dbReference type="ChEBI" id="CHEBI:58464"/>
        <label>2</label>
    </ligand>
</feature>
<feature type="binding site" evidence="3">
    <location>
        <begin position="596"/>
        <end position="723"/>
    </location>
    <ligand>
        <name>a nucleoside 3',5'-cyclic phosphate</name>
        <dbReference type="ChEBI" id="CHEBI:58464"/>
        <label>3</label>
    </ligand>
</feature>
<feature type="modified residue" description="Phosphoserine" evidence="2">
    <location>
        <position position="442"/>
    </location>
</feature>
<feature type="modified residue" description="Phosphoserine" evidence="2">
    <location>
        <position position="451"/>
    </location>
</feature>
<feature type="modified residue" description="Phosphoserine" evidence="2">
    <location>
        <position position="1197"/>
    </location>
</feature>
<name>SWS_DROSE</name>
<evidence type="ECO:0000250" key="1"/>
<evidence type="ECO:0000250" key="2">
    <source>
        <dbReference type="UniProtKB" id="Q9U969"/>
    </source>
</evidence>
<evidence type="ECO:0000255" key="3"/>
<evidence type="ECO:0000255" key="4">
    <source>
        <dbReference type="PROSITE-ProRule" id="PRU01161"/>
    </source>
</evidence>
<evidence type="ECO:0000256" key="5">
    <source>
        <dbReference type="SAM" id="MobiDB-lite"/>
    </source>
</evidence>
<evidence type="ECO:0000312" key="6">
    <source>
        <dbReference type="EMBL" id="EDW53681.1"/>
    </source>
</evidence>
<organism>
    <name type="scientific">Drosophila sechellia</name>
    <name type="common">Fruit fly</name>
    <dbReference type="NCBI Taxonomy" id="7238"/>
    <lineage>
        <taxon>Eukaryota</taxon>
        <taxon>Metazoa</taxon>
        <taxon>Ecdysozoa</taxon>
        <taxon>Arthropoda</taxon>
        <taxon>Hexapoda</taxon>
        <taxon>Insecta</taxon>
        <taxon>Pterygota</taxon>
        <taxon>Neoptera</taxon>
        <taxon>Endopterygota</taxon>
        <taxon>Diptera</taxon>
        <taxon>Brachycera</taxon>
        <taxon>Muscomorpha</taxon>
        <taxon>Ephydroidea</taxon>
        <taxon>Drosophilidae</taxon>
        <taxon>Drosophila</taxon>
        <taxon>Sophophora</taxon>
    </lineage>
</organism>
<comment type="function">
    <text evidence="2">Phospholipase B that deacylates intracellular phosphatidylcholine (PtdCho), generating glycerophosphocholine (GroPtdCho). This deacylation occurs at both sn-2 and sn-1 positions of PtdCho. Its specific chemical modification by certain organophosphorus (OP) compounds leads to distal axonopathy. Plays a role in the signaling mechanism between neurons and glia that regulates glia wrapping during development of the adult brain. Essential for membrane lipid homeostasis and cell survival in both neurons and glia of the adult brain (By similarity).</text>
</comment>
<comment type="catalytic activity">
    <reaction evidence="2">
        <text>a 1-acyl-sn-glycero-3-phosphocholine + H2O = sn-glycerol 3-phosphocholine + a fatty acid + H(+)</text>
        <dbReference type="Rhea" id="RHEA:15177"/>
        <dbReference type="ChEBI" id="CHEBI:15377"/>
        <dbReference type="ChEBI" id="CHEBI:15378"/>
        <dbReference type="ChEBI" id="CHEBI:16870"/>
        <dbReference type="ChEBI" id="CHEBI:28868"/>
        <dbReference type="ChEBI" id="CHEBI:58168"/>
        <dbReference type="EC" id="3.1.1.5"/>
    </reaction>
</comment>
<comment type="subunit">
    <text evidence="1">Interacts with Pka-C3; interaction inhibits the catalytic function of Pka-C3 and the esterase activity of sws.</text>
</comment>
<comment type="subcellular location">
    <subcellularLocation>
        <location evidence="2">Endoplasmic reticulum membrane</location>
        <topology evidence="2">Single-pass type I membrane protein</topology>
    </subcellularLocation>
    <text evidence="2">Sws tethers Pka-C3 to the membrane.</text>
</comment>
<comment type="similarity">
    <text evidence="3">Belongs to the NTE family.</text>
</comment>
<dbReference type="EC" id="3.1.1.5"/>
<dbReference type="EMBL" id="CH480865">
    <property type="protein sequence ID" value="EDW53681.1"/>
    <property type="molecule type" value="Genomic_DNA"/>
</dbReference>
<dbReference type="RefSeq" id="XP_002044474.1">
    <property type="nucleotide sequence ID" value="XM_002044438.1"/>
</dbReference>
<dbReference type="SMR" id="B4IL64"/>
<dbReference type="STRING" id="7238.B4IL64"/>
<dbReference type="EnsemblMetazoa" id="FBtr0194942">
    <property type="protein sequence ID" value="FBpp0193434"/>
    <property type="gene ID" value="FBgn0166898"/>
</dbReference>
<dbReference type="GeneID" id="6620266"/>
<dbReference type="KEGG" id="dse:6620266"/>
<dbReference type="CTD" id="31716"/>
<dbReference type="HOGENOM" id="CLU_000960_1_0_1"/>
<dbReference type="OMA" id="GQQEDRH"/>
<dbReference type="PhylomeDB" id="B4IL64"/>
<dbReference type="Proteomes" id="UP000001292">
    <property type="component" value="Unassembled WGS sequence"/>
</dbReference>
<dbReference type="GO" id="GO:0005789">
    <property type="term" value="C:endoplasmic reticulum membrane"/>
    <property type="evidence" value="ECO:0000250"/>
    <property type="project" value="UniProtKB"/>
</dbReference>
<dbReference type="GO" id="GO:0005886">
    <property type="term" value="C:plasma membrane"/>
    <property type="evidence" value="ECO:0007669"/>
    <property type="project" value="EnsemblMetazoa"/>
</dbReference>
<dbReference type="GO" id="GO:0004622">
    <property type="term" value="F:lysophospholipase activity"/>
    <property type="evidence" value="ECO:0000250"/>
    <property type="project" value="UniProtKB"/>
</dbReference>
<dbReference type="GO" id="GO:0034236">
    <property type="term" value="F:protein kinase A catalytic subunit binding"/>
    <property type="evidence" value="ECO:0007669"/>
    <property type="project" value="EnsemblMetazoa"/>
</dbReference>
<dbReference type="GO" id="GO:0007272">
    <property type="term" value="P:ensheathment of neurons"/>
    <property type="evidence" value="ECO:0007669"/>
    <property type="project" value="EnsemblMetazoa"/>
</dbReference>
<dbReference type="GO" id="GO:0034349">
    <property type="term" value="P:glial cell apoptotic process"/>
    <property type="evidence" value="ECO:0000250"/>
    <property type="project" value="UniProtKB"/>
</dbReference>
<dbReference type="GO" id="GO:0016042">
    <property type="term" value="P:lipid catabolic process"/>
    <property type="evidence" value="ECO:0007669"/>
    <property type="project" value="UniProtKB-KW"/>
</dbReference>
<dbReference type="GO" id="GO:0006643">
    <property type="term" value="P:membrane lipid metabolic process"/>
    <property type="evidence" value="ECO:0000250"/>
    <property type="project" value="UniProtKB"/>
</dbReference>
<dbReference type="GO" id="GO:0061024">
    <property type="term" value="P:membrane organization"/>
    <property type="evidence" value="ECO:0000250"/>
    <property type="project" value="UniProtKB"/>
</dbReference>
<dbReference type="GO" id="GO:0051402">
    <property type="term" value="P:neuron apoptotic process"/>
    <property type="evidence" value="ECO:0000250"/>
    <property type="project" value="UniProtKB"/>
</dbReference>
<dbReference type="GO" id="GO:0046470">
    <property type="term" value="P:phosphatidylcholine metabolic process"/>
    <property type="evidence" value="ECO:0000250"/>
    <property type="project" value="UniProtKB"/>
</dbReference>
<dbReference type="GO" id="GO:0045494">
    <property type="term" value="P:photoreceptor cell maintenance"/>
    <property type="evidence" value="ECO:0007669"/>
    <property type="project" value="EnsemblMetazoa"/>
</dbReference>
<dbReference type="GO" id="GO:0072657">
    <property type="term" value="P:protein localization to membrane"/>
    <property type="evidence" value="ECO:0007669"/>
    <property type="project" value="EnsemblMetazoa"/>
</dbReference>
<dbReference type="GO" id="GO:0007608">
    <property type="term" value="P:sensory perception of smell"/>
    <property type="evidence" value="ECO:0007669"/>
    <property type="project" value="EnsemblMetazoa"/>
</dbReference>
<dbReference type="CDD" id="cd00038">
    <property type="entry name" value="CAP_ED"/>
    <property type="match status" value="3"/>
</dbReference>
<dbReference type="CDD" id="cd07225">
    <property type="entry name" value="Pat_PNPLA6_PNPLA7"/>
    <property type="match status" value="1"/>
</dbReference>
<dbReference type="FunFam" id="2.60.120.10:FF:000010">
    <property type="entry name" value="neuropathy target esterase isoform X1"/>
    <property type="match status" value="1"/>
</dbReference>
<dbReference type="FunFam" id="2.60.120.10:FF:000122">
    <property type="entry name" value="Neuropathy target esterase sws"/>
    <property type="match status" value="1"/>
</dbReference>
<dbReference type="FunFam" id="2.60.120.10:FF:000135">
    <property type="entry name" value="Neuropathy target esterase sws"/>
    <property type="match status" value="1"/>
</dbReference>
<dbReference type="FunFam" id="3.40.1090.10:FF:000022">
    <property type="entry name" value="Neuropathy target esterase sws"/>
    <property type="match status" value="1"/>
</dbReference>
<dbReference type="FunFam" id="3.40.1090.10:FF:000033">
    <property type="entry name" value="Neuropathy target esterase sws"/>
    <property type="match status" value="1"/>
</dbReference>
<dbReference type="Gene3D" id="3.40.1090.10">
    <property type="entry name" value="Cytosolic phospholipase A2 catalytic domain"/>
    <property type="match status" value="2"/>
</dbReference>
<dbReference type="Gene3D" id="2.60.120.10">
    <property type="entry name" value="Jelly Rolls"/>
    <property type="match status" value="3"/>
</dbReference>
<dbReference type="InterPro" id="IPR016035">
    <property type="entry name" value="Acyl_Trfase/lysoPLipase"/>
</dbReference>
<dbReference type="InterPro" id="IPR000595">
    <property type="entry name" value="cNMP-bd_dom"/>
</dbReference>
<dbReference type="InterPro" id="IPR018490">
    <property type="entry name" value="cNMP-bd_dom_sf"/>
</dbReference>
<dbReference type="InterPro" id="IPR001423">
    <property type="entry name" value="LysoPLipase_patatin_CS"/>
</dbReference>
<dbReference type="InterPro" id="IPR050301">
    <property type="entry name" value="NTE"/>
</dbReference>
<dbReference type="InterPro" id="IPR056556">
    <property type="entry name" value="NTE1_P-loop_dom"/>
</dbReference>
<dbReference type="InterPro" id="IPR002641">
    <property type="entry name" value="PNPLA_dom"/>
</dbReference>
<dbReference type="InterPro" id="IPR014710">
    <property type="entry name" value="RmlC-like_jellyroll"/>
</dbReference>
<dbReference type="PANTHER" id="PTHR14226:SF29">
    <property type="entry name" value="NEUROPATHY TARGET ESTERASE SWS"/>
    <property type="match status" value="1"/>
</dbReference>
<dbReference type="PANTHER" id="PTHR14226">
    <property type="entry name" value="NEUROPATHY TARGET ESTERASE/SWISS CHEESE D.MELANOGASTER"/>
    <property type="match status" value="1"/>
</dbReference>
<dbReference type="Pfam" id="PF00027">
    <property type="entry name" value="cNMP_binding"/>
    <property type="match status" value="3"/>
</dbReference>
<dbReference type="Pfam" id="PF24179">
    <property type="entry name" value="NTE_Ploop"/>
    <property type="match status" value="1"/>
</dbReference>
<dbReference type="Pfam" id="PF01734">
    <property type="entry name" value="Patatin"/>
    <property type="match status" value="1"/>
</dbReference>
<dbReference type="SMART" id="SM00100">
    <property type="entry name" value="cNMP"/>
    <property type="match status" value="3"/>
</dbReference>
<dbReference type="SUPFAM" id="SSF51206">
    <property type="entry name" value="cAMP-binding domain-like"/>
    <property type="match status" value="3"/>
</dbReference>
<dbReference type="SUPFAM" id="SSF52151">
    <property type="entry name" value="FabD/lysophospholipase-like"/>
    <property type="match status" value="2"/>
</dbReference>
<dbReference type="PROSITE" id="PS50042">
    <property type="entry name" value="CNMP_BINDING_3"/>
    <property type="match status" value="3"/>
</dbReference>
<dbReference type="PROSITE" id="PS51635">
    <property type="entry name" value="PNPLA"/>
    <property type="match status" value="1"/>
</dbReference>
<dbReference type="PROSITE" id="PS01237">
    <property type="entry name" value="UPF0028"/>
    <property type="match status" value="1"/>
</dbReference>
<reference evidence="6" key="1">
    <citation type="journal article" date="2007" name="Nature">
        <title>Evolution of genes and genomes on the Drosophila phylogeny.</title>
        <authorList>
            <consortium name="Drosophila 12 genomes consortium"/>
        </authorList>
    </citation>
    <scope>NUCLEOTIDE SEQUENCE [LARGE SCALE GENOMIC DNA]</scope>
    <source>
        <strain evidence="6">Rob3c / Tucson 14021-0248.25</strain>
    </source>
</reference>
<gene>
    <name evidence="2" type="primary">sws</name>
    <name type="ORF">GM11957</name>
</gene>
<proteinExistence type="inferred from homology"/>